<keyword id="KW-0131">Cell cycle</keyword>
<keyword id="KW-0132">Cell division</keyword>
<keyword id="KW-0175">Coiled coil</keyword>
<keyword id="KW-0963">Cytoplasm</keyword>
<keyword id="KW-1185">Reference proteome</keyword>
<keyword id="KW-0717">Septation</keyword>
<comment type="function">
    <text evidence="1">Non-essential, abundant cell division factor that is required for proper Z-ring formation. It is recruited early to the divisome by direct interaction with FtsZ, stimulating Z-ring assembly and thereby promoting cell division earlier in the cell cycle. Its recruitment to the Z-ring requires functional FtsA or ZipA.</text>
</comment>
<comment type="subunit">
    <text evidence="1">Homodimer. The ends of the coiled-coil dimer bind to each other, forming polymers. Interacts with FtsZ.</text>
</comment>
<comment type="subcellular location">
    <subcellularLocation>
        <location>Cytoplasm</location>
    </subcellularLocation>
    <text evidence="1">Localizes to the septum at mid-cell, in a FtsZ-like pattern.</text>
</comment>
<comment type="similarity">
    <text evidence="1">Belongs to the ZapB family.</text>
</comment>
<proteinExistence type="inferred from homology"/>
<protein>
    <recommendedName>
        <fullName evidence="1">Cell division protein ZapB</fullName>
    </recommendedName>
</protein>
<organism>
    <name type="scientific">Actinobacillus succinogenes (strain ATCC 55618 / DSM 22257 / CCUG 43843 / 130Z)</name>
    <dbReference type="NCBI Taxonomy" id="339671"/>
    <lineage>
        <taxon>Bacteria</taxon>
        <taxon>Pseudomonadati</taxon>
        <taxon>Pseudomonadota</taxon>
        <taxon>Gammaproteobacteria</taxon>
        <taxon>Pasteurellales</taxon>
        <taxon>Pasteurellaceae</taxon>
        <taxon>Actinobacillus</taxon>
    </lineage>
</organism>
<evidence type="ECO:0000255" key="1">
    <source>
        <dbReference type="HAMAP-Rule" id="MF_01196"/>
    </source>
</evidence>
<gene>
    <name evidence="1" type="primary">zapB</name>
    <name type="ordered locus">Asuc_0393</name>
</gene>
<reference key="1">
    <citation type="journal article" date="2010" name="BMC Genomics">
        <title>A genomic perspective on the potential of Actinobacillus succinogenes for industrial succinate production.</title>
        <authorList>
            <person name="McKinlay J.B."/>
            <person name="Laivenieks M."/>
            <person name="Schindler B.D."/>
            <person name="McKinlay A.A."/>
            <person name="Siddaramappa S."/>
            <person name="Challacombe J.F."/>
            <person name="Lowry S.R."/>
            <person name="Clum A."/>
            <person name="Lapidus A.L."/>
            <person name="Burkhart K.B."/>
            <person name="Harkins V."/>
            <person name="Vieille C."/>
        </authorList>
    </citation>
    <scope>NUCLEOTIDE SEQUENCE [LARGE SCALE GENOMIC DNA]</scope>
    <source>
        <strain>ATCC 55618 / DSM 22257 / CCUG 43843 / 130Z</strain>
    </source>
</reference>
<name>ZAPB_ACTSZ</name>
<dbReference type="EMBL" id="CP000746">
    <property type="protein sequence ID" value="ABR73771.1"/>
    <property type="molecule type" value="Genomic_DNA"/>
</dbReference>
<dbReference type="RefSeq" id="WP_012072156.1">
    <property type="nucleotide sequence ID" value="NC_009655.1"/>
</dbReference>
<dbReference type="SMR" id="A6VLC4"/>
<dbReference type="STRING" id="339671.Asuc_0393"/>
<dbReference type="KEGG" id="asu:Asuc_0393"/>
<dbReference type="eggNOG" id="COG3074">
    <property type="taxonomic scope" value="Bacteria"/>
</dbReference>
<dbReference type="HOGENOM" id="CLU_171174_2_0_6"/>
<dbReference type="OrthoDB" id="6554593at2"/>
<dbReference type="Proteomes" id="UP000001114">
    <property type="component" value="Chromosome"/>
</dbReference>
<dbReference type="GO" id="GO:0005737">
    <property type="term" value="C:cytoplasm"/>
    <property type="evidence" value="ECO:0007669"/>
    <property type="project" value="UniProtKB-SubCell"/>
</dbReference>
<dbReference type="GO" id="GO:0000917">
    <property type="term" value="P:division septum assembly"/>
    <property type="evidence" value="ECO:0007669"/>
    <property type="project" value="UniProtKB-KW"/>
</dbReference>
<dbReference type="GO" id="GO:0043093">
    <property type="term" value="P:FtsZ-dependent cytokinesis"/>
    <property type="evidence" value="ECO:0007669"/>
    <property type="project" value="UniProtKB-UniRule"/>
</dbReference>
<dbReference type="Gene3D" id="1.20.5.340">
    <property type="match status" value="1"/>
</dbReference>
<dbReference type="HAMAP" id="MF_01196">
    <property type="entry name" value="ZapB"/>
    <property type="match status" value="1"/>
</dbReference>
<dbReference type="InterPro" id="IPR009252">
    <property type="entry name" value="Cell_div_ZapB"/>
</dbReference>
<dbReference type="Pfam" id="PF06005">
    <property type="entry name" value="ZapB"/>
    <property type="match status" value="1"/>
</dbReference>
<sequence>MSSEILDQLESKIRQAVETIQLLQLEVEELKEKNDQAQQANDALRNENEQLKVEHNNWQERLRSLLGQIDNV</sequence>
<feature type="chain" id="PRO_0000333891" description="Cell division protein ZapB">
    <location>
        <begin position="1"/>
        <end position="72"/>
    </location>
</feature>
<feature type="coiled-coil region" evidence="1">
    <location>
        <begin position="1"/>
        <end position="72"/>
    </location>
</feature>
<accession>A6VLC4</accession>